<name>MDTI_ECO8A</name>
<reference key="1">
    <citation type="journal article" date="2009" name="PLoS Genet.">
        <title>Organised genome dynamics in the Escherichia coli species results in highly diverse adaptive paths.</title>
        <authorList>
            <person name="Touchon M."/>
            <person name="Hoede C."/>
            <person name="Tenaillon O."/>
            <person name="Barbe V."/>
            <person name="Baeriswyl S."/>
            <person name="Bidet P."/>
            <person name="Bingen E."/>
            <person name="Bonacorsi S."/>
            <person name="Bouchier C."/>
            <person name="Bouvet O."/>
            <person name="Calteau A."/>
            <person name="Chiapello H."/>
            <person name="Clermont O."/>
            <person name="Cruveiller S."/>
            <person name="Danchin A."/>
            <person name="Diard M."/>
            <person name="Dossat C."/>
            <person name="Karoui M.E."/>
            <person name="Frapy E."/>
            <person name="Garry L."/>
            <person name="Ghigo J.M."/>
            <person name="Gilles A.M."/>
            <person name="Johnson J."/>
            <person name="Le Bouguenec C."/>
            <person name="Lescat M."/>
            <person name="Mangenot S."/>
            <person name="Martinez-Jehanne V."/>
            <person name="Matic I."/>
            <person name="Nassif X."/>
            <person name="Oztas S."/>
            <person name="Petit M.A."/>
            <person name="Pichon C."/>
            <person name="Rouy Z."/>
            <person name="Ruf C.S."/>
            <person name="Schneider D."/>
            <person name="Tourret J."/>
            <person name="Vacherie B."/>
            <person name="Vallenet D."/>
            <person name="Medigue C."/>
            <person name="Rocha E.P.C."/>
            <person name="Denamur E."/>
        </authorList>
    </citation>
    <scope>NUCLEOTIDE SEQUENCE [LARGE SCALE GENOMIC DNA]</scope>
    <source>
        <strain>IAI1</strain>
    </source>
</reference>
<evidence type="ECO:0000255" key="1">
    <source>
        <dbReference type="HAMAP-Rule" id="MF_01597"/>
    </source>
</evidence>
<dbReference type="EMBL" id="CU928160">
    <property type="protein sequence ID" value="CAQ98506.1"/>
    <property type="molecule type" value="Genomic_DNA"/>
</dbReference>
<dbReference type="RefSeq" id="WP_000046661.1">
    <property type="nucleotide sequence ID" value="NC_011741.1"/>
</dbReference>
<dbReference type="SMR" id="B7LZZ1"/>
<dbReference type="GeneID" id="93775747"/>
<dbReference type="KEGG" id="ecr:ECIAI1_1649"/>
<dbReference type="HOGENOM" id="CLU_133067_0_4_6"/>
<dbReference type="GO" id="GO:0005886">
    <property type="term" value="C:plasma membrane"/>
    <property type="evidence" value="ECO:0007669"/>
    <property type="project" value="UniProtKB-SubCell"/>
</dbReference>
<dbReference type="GO" id="GO:0015199">
    <property type="term" value="F:amino-acid betaine transmembrane transporter activity"/>
    <property type="evidence" value="ECO:0007669"/>
    <property type="project" value="TreeGrafter"/>
</dbReference>
<dbReference type="GO" id="GO:0015297">
    <property type="term" value="F:antiporter activity"/>
    <property type="evidence" value="ECO:0007669"/>
    <property type="project" value="TreeGrafter"/>
</dbReference>
<dbReference type="GO" id="GO:0015220">
    <property type="term" value="F:choline transmembrane transporter activity"/>
    <property type="evidence" value="ECO:0007669"/>
    <property type="project" value="TreeGrafter"/>
</dbReference>
<dbReference type="GO" id="GO:0015606">
    <property type="term" value="F:spermidine transmembrane transporter activity"/>
    <property type="evidence" value="ECO:0007669"/>
    <property type="project" value="UniProtKB-UniRule"/>
</dbReference>
<dbReference type="GO" id="GO:0031460">
    <property type="term" value="P:glycine betaine transport"/>
    <property type="evidence" value="ECO:0007669"/>
    <property type="project" value="TreeGrafter"/>
</dbReference>
<dbReference type="FunFam" id="1.10.3730.20:FF:000001">
    <property type="entry name" value="Quaternary ammonium compound resistance transporter SugE"/>
    <property type="match status" value="1"/>
</dbReference>
<dbReference type="Gene3D" id="1.10.3730.20">
    <property type="match status" value="1"/>
</dbReference>
<dbReference type="HAMAP" id="MF_01597">
    <property type="entry name" value="MdtI"/>
    <property type="match status" value="1"/>
</dbReference>
<dbReference type="InterPro" id="IPR000390">
    <property type="entry name" value="Small_drug/metabolite_transptr"/>
</dbReference>
<dbReference type="InterPro" id="IPR045324">
    <property type="entry name" value="Small_multidrug_res"/>
</dbReference>
<dbReference type="InterPro" id="IPR023737">
    <property type="entry name" value="Spermidine_export_MdtI"/>
</dbReference>
<dbReference type="NCBIfam" id="NF007934">
    <property type="entry name" value="PRK10650.1"/>
    <property type="match status" value="1"/>
</dbReference>
<dbReference type="PANTHER" id="PTHR30561">
    <property type="entry name" value="SMR FAMILY PROTON-DEPENDENT DRUG EFFLUX TRANSPORTER SUGE"/>
    <property type="match status" value="1"/>
</dbReference>
<dbReference type="PANTHER" id="PTHR30561:SF6">
    <property type="entry name" value="SPERMIDINE EXPORT PROTEIN MDTI"/>
    <property type="match status" value="1"/>
</dbReference>
<dbReference type="Pfam" id="PF00893">
    <property type="entry name" value="Multi_Drug_Res"/>
    <property type="match status" value="1"/>
</dbReference>
<dbReference type="SUPFAM" id="SSF103481">
    <property type="entry name" value="Multidrug resistance efflux transporter EmrE"/>
    <property type="match status" value="1"/>
</dbReference>
<feature type="chain" id="PRO_1000197317" description="Spermidine export protein MdtI">
    <location>
        <begin position="1"/>
        <end position="109"/>
    </location>
</feature>
<feature type="transmembrane region" description="Helical" evidence="1">
    <location>
        <begin position="6"/>
        <end position="26"/>
    </location>
</feature>
<feature type="transmembrane region" description="Helical" evidence="1">
    <location>
        <begin position="36"/>
        <end position="56"/>
    </location>
</feature>
<feature type="transmembrane region" description="Helical" evidence="1">
    <location>
        <begin position="64"/>
        <end position="84"/>
    </location>
</feature>
<feature type="transmembrane region" description="Helical" evidence="1">
    <location>
        <begin position="88"/>
        <end position="108"/>
    </location>
</feature>
<gene>
    <name evidence="1" type="primary">mdtI</name>
    <name type="ordered locus">ECIAI1_1649</name>
</gene>
<sequence length="109" mass="11720">MAQFEWVHAAWLALAIVLEIVANVFLKFSDGFRRKIFGLLSLAAVLAAFSALSQAVKGIDLSVAYALWGGFGIAATLAAGWILFGQRLNRKGWIGLVLLLAGMIMVKLA</sequence>
<accession>B7LZZ1</accession>
<protein>
    <recommendedName>
        <fullName evidence="1">Spermidine export protein MdtI</fullName>
    </recommendedName>
</protein>
<proteinExistence type="inferred from homology"/>
<organism>
    <name type="scientific">Escherichia coli O8 (strain IAI1)</name>
    <dbReference type="NCBI Taxonomy" id="585034"/>
    <lineage>
        <taxon>Bacteria</taxon>
        <taxon>Pseudomonadati</taxon>
        <taxon>Pseudomonadota</taxon>
        <taxon>Gammaproteobacteria</taxon>
        <taxon>Enterobacterales</taxon>
        <taxon>Enterobacteriaceae</taxon>
        <taxon>Escherichia</taxon>
    </lineage>
</organism>
<comment type="function">
    <text evidence="1">Catalyzes the excretion of spermidine.</text>
</comment>
<comment type="subunit">
    <text evidence="1">Forms a complex with MdtJ.</text>
</comment>
<comment type="subcellular location">
    <subcellularLocation>
        <location evidence="1">Cell inner membrane</location>
        <topology evidence="1">Multi-pass membrane protein</topology>
    </subcellularLocation>
</comment>
<comment type="similarity">
    <text evidence="1">Belongs to the drug/metabolite transporter (DMT) superfamily. Small multidrug resistance (SMR) (TC 2.A.7.1) family. MdtI subfamily.</text>
</comment>
<keyword id="KW-0997">Cell inner membrane</keyword>
<keyword id="KW-1003">Cell membrane</keyword>
<keyword id="KW-0472">Membrane</keyword>
<keyword id="KW-0812">Transmembrane</keyword>
<keyword id="KW-1133">Transmembrane helix</keyword>
<keyword id="KW-0813">Transport</keyword>